<keyword id="KW-1015">Disulfide bond</keyword>
<keyword id="KW-0325">Glycoprotein</keyword>
<keyword id="KW-0446">Lipid-binding</keyword>
<keyword id="KW-0677">Repeat</keyword>
<keyword id="KW-0964">Secreted</keyword>
<keyword id="KW-0732">Signal</keyword>
<keyword id="KW-0754">Steroid-binding</keyword>
<evidence type="ECO:0000250" key="1"/>
<evidence type="ECO:0000255" key="2"/>
<evidence type="ECO:0000255" key="3">
    <source>
        <dbReference type="PROSITE-ProRule" id="PRU00122"/>
    </source>
</evidence>
<evidence type="ECO:0000305" key="4"/>
<name>SHBG_PHOSU</name>
<organism>
    <name type="scientific">Phodopus sungorus</name>
    <name type="common">Striped hairy-footed hamster</name>
    <name type="synonym">Djungarian hamster</name>
    <dbReference type="NCBI Taxonomy" id="10044"/>
    <lineage>
        <taxon>Eukaryota</taxon>
        <taxon>Metazoa</taxon>
        <taxon>Chordata</taxon>
        <taxon>Craniata</taxon>
        <taxon>Vertebrata</taxon>
        <taxon>Euteleostomi</taxon>
        <taxon>Mammalia</taxon>
        <taxon>Eutheria</taxon>
        <taxon>Euarchontoglires</taxon>
        <taxon>Glires</taxon>
        <taxon>Rodentia</taxon>
        <taxon>Myomorpha</taxon>
        <taxon>Muroidea</taxon>
        <taxon>Cricetidae</taxon>
        <taxon>Cricetinae</taxon>
        <taxon>Phodopus</taxon>
    </lineage>
</organism>
<dbReference type="EMBL" id="U16673">
    <property type="protein sequence ID" value="AAC52344.1"/>
    <property type="molecule type" value="mRNA"/>
</dbReference>
<dbReference type="EMBL" id="U63010">
    <property type="protein sequence ID" value="AAB41681.1"/>
    <property type="molecule type" value="mRNA"/>
</dbReference>
<dbReference type="SMR" id="Q62588"/>
<dbReference type="GlyCosmos" id="Q62588">
    <property type="glycosylation" value="5 sites, No reported glycans"/>
</dbReference>
<dbReference type="GO" id="GO:0005576">
    <property type="term" value="C:extracellular region"/>
    <property type="evidence" value="ECO:0007669"/>
    <property type="project" value="UniProtKB-SubCell"/>
</dbReference>
<dbReference type="GO" id="GO:0005496">
    <property type="term" value="F:steroid binding"/>
    <property type="evidence" value="ECO:0007669"/>
    <property type="project" value="UniProtKB-KW"/>
</dbReference>
<dbReference type="CDD" id="cd00110">
    <property type="entry name" value="LamG"/>
    <property type="match status" value="1"/>
</dbReference>
<dbReference type="FunFam" id="2.60.120.200:FF:000107">
    <property type="entry name" value="Sex hormone-binding globulin"/>
    <property type="match status" value="1"/>
</dbReference>
<dbReference type="Gene3D" id="2.60.120.200">
    <property type="match status" value="1"/>
</dbReference>
<dbReference type="InterPro" id="IPR013320">
    <property type="entry name" value="ConA-like_dom_sf"/>
</dbReference>
<dbReference type="InterPro" id="IPR051145">
    <property type="entry name" value="GAS-SHBG-PROS"/>
</dbReference>
<dbReference type="InterPro" id="IPR001791">
    <property type="entry name" value="Laminin_G"/>
</dbReference>
<dbReference type="PANTHER" id="PTHR24040">
    <property type="entry name" value="LAMININ G-LIKE DOMAIN-CONTAINING PROTEIN"/>
    <property type="match status" value="1"/>
</dbReference>
<dbReference type="PANTHER" id="PTHR24040:SF3">
    <property type="entry name" value="SEX HORMONE-BINDING GLOBULIN"/>
    <property type="match status" value="1"/>
</dbReference>
<dbReference type="Pfam" id="PF00054">
    <property type="entry name" value="Laminin_G_1"/>
    <property type="match status" value="1"/>
</dbReference>
<dbReference type="SMART" id="SM00282">
    <property type="entry name" value="LamG"/>
    <property type="match status" value="1"/>
</dbReference>
<dbReference type="SUPFAM" id="SSF49899">
    <property type="entry name" value="Concanavalin A-like lectins/glucanases"/>
    <property type="match status" value="2"/>
</dbReference>
<dbReference type="PROSITE" id="PS50025">
    <property type="entry name" value="LAM_G_DOMAIN"/>
    <property type="match status" value="1"/>
</dbReference>
<gene>
    <name type="primary">SHBG</name>
</gene>
<sequence length="399" mass="43842">MENRDSVASLLLLLLLLPPPHTHQGQVLRHVVPTQNSQDSPARYLSNGPGQEPVAVMTIDLTQMSKPYSSFEFRTLDPEGVIFYGDTNTKDDWFMLGLRDGQLEIQMHNPWAQLTVGFGPRLNDGRWHQVELKMSGDSLQLWVDGKELLCLRQISGTLANNSWPSMRIALGGLLLPTSSLRFPLVPALDGCLRRDTWLGHQVHLSPSAPNLGNCDVDLQPGLFFPQGTHAEFSLQDIPQPRTDPWSFSLELGLKLVDGSGCLLALGTRTNSSWLSLHLQDQKVVLSSGVEPKLVLALDMGLPLQLKLDILKVVLSQGPKTEVLGASASRLAALRTLWSHPQGLLSLGALAGDNSSASFCLSDLWVQGQRLDIDQALNRSQNIWTHSCPHSPNNVSHISH</sequence>
<accession>Q62588</accession>
<accession>P97518</accession>
<proteinExistence type="evidence at transcript level"/>
<protein>
    <recommendedName>
        <fullName>Sex hormone-binding globulin</fullName>
        <shortName>SHBG</shortName>
    </recommendedName>
    <alternativeName>
        <fullName>Sex steroid-binding protein</fullName>
        <shortName>SBP</shortName>
    </alternativeName>
    <alternativeName>
        <fullName>Testis-specific androgen-binding protein</fullName>
        <shortName>ABP</shortName>
    </alternativeName>
</protein>
<feature type="signal peptide" evidence="2">
    <location>
        <begin position="1"/>
        <end position="29"/>
    </location>
</feature>
<feature type="chain" id="PRO_0000032559" description="Sex hormone-binding globulin">
    <location>
        <begin position="30"/>
        <end position="399"/>
    </location>
</feature>
<feature type="domain" description="Laminin G-like 1" evidence="3">
    <location>
        <begin position="43"/>
        <end position="214"/>
    </location>
</feature>
<feature type="domain" description="Laminin G-like 2" evidence="3">
    <location>
        <begin position="221"/>
        <end position="387"/>
    </location>
</feature>
<feature type="glycosylation site" description="N-linked (GlcNAc...) asparagine" evidence="2">
    <location>
        <position position="160"/>
    </location>
</feature>
<feature type="glycosylation site" description="N-linked (GlcNAc...) asparagine" evidence="2">
    <location>
        <position position="270"/>
    </location>
</feature>
<feature type="glycosylation site" description="N-linked (GlcNAc...) asparagine" evidence="2">
    <location>
        <position position="353"/>
    </location>
</feature>
<feature type="glycosylation site" description="N-linked (GlcNAc...) asparagine" evidence="2">
    <location>
        <position position="377"/>
    </location>
</feature>
<feature type="glycosylation site" description="N-linked (GlcNAc...) asparagine" evidence="2">
    <location>
        <position position="393"/>
    </location>
</feature>
<feature type="disulfide bond" evidence="3">
    <location>
        <begin position="191"/>
        <end position="214"/>
    </location>
</feature>
<feature type="disulfide bond" evidence="3">
    <location>
        <begin position="359"/>
        <end position="387"/>
    </location>
</feature>
<feature type="sequence conflict" description="In Ref. 2; AAB41681." evidence="4" ref="2">
    <original>V</original>
    <variation>I</variation>
    <location>
        <position position="289"/>
    </location>
</feature>
<feature type="sequence conflict" description="In Ref. 2; AAB41681." evidence="4" ref="2">
    <original>G</original>
    <variation>V</variation>
    <location>
        <position position="324"/>
    </location>
</feature>
<reference key="1">
    <citation type="journal article" date="1995" name="J. Steroid Biochem. Mol. Biol.">
        <title>Hepatic expression of sex hormone-binding globulin associated with the postnatal surge of serum androgen-binding activity in the Djungarian hamster.</title>
        <authorList>
            <person name="Cates J.M."/>
            <person name="Damassa D.A."/>
            <person name="Gagin G.A."/>
            <person name="Dempsey R.V."/>
        </authorList>
    </citation>
    <scope>NUCLEOTIDE SEQUENCE [MRNA]</scope>
    <source>
        <tissue>Liver</tissue>
    </source>
</reference>
<reference key="2">
    <citation type="journal article" date="1997" name="J. Reprod. Fertil.">
        <title>Characterization and developmental expression patterns of testicular androgen-binding protein in the Djungarian hamster (Phodopus sungorus).</title>
        <authorList>
            <person name="Cates J.M."/>
            <person name="Damassa D.A."/>
        </authorList>
    </citation>
    <scope>NUCLEOTIDE SEQUENCE [MRNA]</scope>
    <source>
        <tissue>Testis</tissue>
    </source>
</reference>
<comment type="function">
    <text evidence="1">Functions as an androgen transport protein, but may also be involved in receptor mediated processes. Each dimer binds one molecule of steroid. Specific for 5-alpha-dihydrotestosterone, testosterone, and 17-beta-estradiol. Regulates the plasma metabolic clearance rate of steroid hormones by controlling their plasma concentration (By similarity).</text>
</comment>
<comment type="subunit">
    <text evidence="1">Homodimer.</text>
</comment>
<comment type="subcellular location">
    <subcellularLocation>
        <location evidence="1">Secreted</location>
    </subcellularLocation>
    <text evidence="1">In testis, it is synthesized by the Sertoli cells, secreted into the lumen of the seminiferous tubule and transported to the epididymis.</text>
</comment>
<comment type="PTM">
    <text>Differentially glycosylated in liver (SHBG) and testis (ABP).</text>
</comment>